<geneLocation type="chloroplast"/>
<keyword id="KW-0150">Chloroplast</keyword>
<keyword id="KW-0934">Plastid</keyword>
<keyword id="KW-0687">Ribonucleoprotein</keyword>
<keyword id="KW-0689">Ribosomal protein</keyword>
<dbReference type="EMBL" id="DQ898156">
    <property type="protein sequence ID" value="ABI32413.1"/>
    <property type="molecule type" value="Genomic_DNA"/>
</dbReference>
<dbReference type="RefSeq" id="YP_740106.1">
    <property type="nucleotide sequence ID" value="NC_008325.1"/>
</dbReference>
<dbReference type="SMR" id="Q0G9X3"/>
<dbReference type="GeneID" id="4266716"/>
<dbReference type="OMA" id="PYIFMEK"/>
<dbReference type="GO" id="GO:0009507">
    <property type="term" value="C:chloroplast"/>
    <property type="evidence" value="ECO:0007669"/>
    <property type="project" value="UniProtKB-SubCell"/>
</dbReference>
<dbReference type="GO" id="GO:0005763">
    <property type="term" value="C:mitochondrial small ribosomal subunit"/>
    <property type="evidence" value="ECO:0007669"/>
    <property type="project" value="TreeGrafter"/>
</dbReference>
<dbReference type="GO" id="GO:0003735">
    <property type="term" value="F:structural constituent of ribosome"/>
    <property type="evidence" value="ECO:0007669"/>
    <property type="project" value="InterPro"/>
</dbReference>
<dbReference type="GO" id="GO:0006412">
    <property type="term" value="P:translation"/>
    <property type="evidence" value="ECO:0007669"/>
    <property type="project" value="UniProtKB-UniRule"/>
</dbReference>
<dbReference type="CDD" id="cd01425">
    <property type="entry name" value="RPS2"/>
    <property type="match status" value="1"/>
</dbReference>
<dbReference type="FunFam" id="3.40.50.10490:FF:000101">
    <property type="match status" value="1"/>
</dbReference>
<dbReference type="FunFam" id="1.10.287.610:FF:000001">
    <property type="entry name" value="30S ribosomal protein S2"/>
    <property type="match status" value="1"/>
</dbReference>
<dbReference type="Gene3D" id="3.40.50.10490">
    <property type="entry name" value="Glucose-6-phosphate isomerase like protein, domain 1"/>
    <property type="match status" value="1"/>
</dbReference>
<dbReference type="Gene3D" id="1.10.287.610">
    <property type="entry name" value="Helix hairpin bin"/>
    <property type="match status" value="1"/>
</dbReference>
<dbReference type="HAMAP" id="MF_00291_B">
    <property type="entry name" value="Ribosomal_uS2_B"/>
    <property type="match status" value="1"/>
</dbReference>
<dbReference type="InterPro" id="IPR001865">
    <property type="entry name" value="Ribosomal_uS2"/>
</dbReference>
<dbReference type="InterPro" id="IPR005706">
    <property type="entry name" value="Ribosomal_uS2_bac/mit/plastid"/>
</dbReference>
<dbReference type="InterPro" id="IPR018130">
    <property type="entry name" value="Ribosomal_uS2_CS"/>
</dbReference>
<dbReference type="InterPro" id="IPR023591">
    <property type="entry name" value="Ribosomal_uS2_flav_dom_sf"/>
</dbReference>
<dbReference type="NCBIfam" id="TIGR01011">
    <property type="entry name" value="rpsB_bact"/>
    <property type="match status" value="1"/>
</dbReference>
<dbReference type="PANTHER" id="PTHR12534">
    <property type="entry name" value="30S RIBOSOMAL PROTEIN S2 PROKARYOTIC AND ORGANELLAR"/>
    <property type="match status" value="1"/>
</dbReference>
<dbReference type="PANTHER" id="PTHR12534:SF0">
    <property type="entry name" value="SMALL RIBOSOMAL SUBUNIT PROTEIN US2M"/>
    <property type="match status" value="1"/>
</dbReference>
<dbReference type="Pfam" id="PF00318">
    <property type="entry name" value="Ribosomal_S2"/>
    <property type="match status" value="1"/>
</dbReference>
<dbReference type="PRINTS" id="PR00395">
    <property type="entry name" value="RIBOSOMALS2"/>
</dbReference>
<dbReference type="SUPFAM" id="SSF52313">
    <property type="entry name" value="Ribosomal protein S2"/>
    <property type="match status" value="1"/>
</dbReference>
<dbReference type="PROSITE" id="PS00962">
    <property type="entry name" value="RIBOSOMAL_S2_1"/>
    <property type="match status" value="1"/>
</dbReference>
<dbReference type="PROSITE" id="PS00963">
    <property type="entry name" value="RIBOSOMAL_S2_2"/>
    <property type="match status" value="1"/>
</dbReference>
<evidence type="ECO:0000305" key="1"/>
<feature type="chain" id="PRO_0000352110" description="Small ribosomal subunit protein uS2c">
    <location>
        <begin position="1"/>
        <end position="236"/>
    </location>
</feature>
<comment type="subcellular location">
    <subcellularLocation>
        <location>Plastid</location>
        <location>Chloroplast</location>
    </subcellularLocation>
</comment>
<comment type="similarity">
    <text evidence="1">Belongs to the universal ribosomal protein uS2 family.</text>
</comment>
<name>RR2_DAUCA</name>
<organism>
    <name type="scientific">Daucus carota</name>
    <name type="common">Wild carrot</name>
    <dbReference type="NCBI Taxonomy" id="4039"/>
    <lineage>
        <taxon>Eukaryota</taxon>
        <taxon>Viridiplantae</taxon>
        <taxon>Streptophyta</taxon>
        <taxon>Embryophyta</taxon>
        <taxon>Tracheophyta</taxon>
        <taxon>Spermatophyta</taxon>
        <taxon>Magnoliopsida</taxon>
        <taxon>eudicotyledons</taxon>
        <taxon>Gunneridae</taxon>
        <taxon>Pentapetalae</taxon>
        <taxon>asterids</taxon>
        <taxon>campanulids</taxon>
        <taxon>Apiales</taxon>
        <taxon>Apiaceae</taxon>
        <taxon>Apioideae</taxon>
        <taxon>Scandiceae</taxon>
        <taxon>Daucinae</taxon>
        <taxon>Daucus</taxon>
        <taxon>Daucus sect. Daucus</taxon>
    </lineage>
</organism>
<sequence length="236" mass="26905">MTKRYWNIDLEEMMKAGVHFGHGTRKWNPKMAPYISAKRKGIHIINLTRTARFLSEACDLVFDAASRGKQFLIVGTKNKAADLVAWAAIRARCHYVNKKWLGGMLTNWSTTETRLHKFRDLRTEQKTGRLRRLPKRDAAVLKRQLSHLQTYLGGIKYMTGLPDIVIIIDQHEEYTALQECITLGIPTISLIDTNCDPDLADISIPANDDAISSIRLILNKLVFAIREGRSSYIRNP</sequence>
<reference key="1">
    <citation type="journal article" date="2006" name="BMC Genomics">
        <title>Complete plastid genome sequence of Daucus carota: implications for biotechnology and phylogeny of angiosperms.</title>
        <authorList>
            <person name="Ruhlman T."/>
            <person name="Lee S.-B."/>
            <person name="Jansen R.K."/>
            <person name="Hostetler J.B."/>
            <person name="Tallon L.J."/>
            <person name="Town C.D."/>
            <person name="Daniell H."/>
        </authorList>
    </citation>
    <scope>NUCLEOTIDE SEQUENCE [LARGE SCALE GENOMIC DNA]</scope>
    <source>
        <strain>cv. Danvers Half-long</strain>
    </source>
</reference>
<protein>
    <recommendedName>
        <fullName evidence="1">Small ribosomal subunit protein uS2c</fullName>
    </recommendedName>
    <alternativeName>
        <fullName>30S ribosomal protein S2, chloroplastic</fullName>
    </alternativeName>
</protein>
<accession>Q0G9X3</accession>
<proteinExistence type="inferred from homology"/>
<gene>
    <name type="primary">rps2</name>
</gene>